<feature type="initiator methionine" description="Removed" evidence="3">
    <location>
        <position position="1"/>
    </location>
</feature>
<feature type="chain" id="PRO_0000312764" description="Hemoglobin subunit alpha-1" evidence="3">
    <location>
        <begin position="2"/>
        <end position="143"/>
    </location>
</feature>
<feature type="domain" description="Globin" evidence="2">
    <location>
        <begin position="2"/>
        <end position="143"/>
    </location>
</feature>
<feature type="binding site" evidence="2">
    <location>
        <position position="60"/>
    </location>
    <ligand>
        <name>O2</name>
        <dbReference type="ChEBI" id="CHEBI:15379"/>
    </ligand>
</feature>
<feature type="binding site" description="proximal binding residue" evidence="2">
    <location>
        <position position="89"/>
    </location>
    <ligand>
        <name>heme b</name>
        <dbReference type="ChEBI" id="CHEBI:60344"/>
    </ligand>
    <ligandPart>
        <name>Fe</name>
        <dbReference type="ChEBI" id="CHEBI:18248"/>
    </ligandPart>
</feature>
<feature type="modified residue" description="N-acetylserine" evidence="3">
    <location>
        <position position="2"/>
    </location>
</feature>
<proteinExistence type="evidence at protein level"/>
<evidence type="ECO:0000250" key="1">
    <source>
        <dbReference type="UniProtKB" id="P45718"/>
    </source>
</evidence>
<evidence type="ECO:0000255" key="2">
    <source>
        <dbReference type="PROSITE-ProRule" id="PRU00238"/>
    </source>
</evidence>
<evidence type="ECO:0000269" key="3">
    <source>
    </source>
</evidence>
<evidence type="ECO:0000303" key="4">
    <source>
    </source>
</evidence>
<evidence type="ECO:0000305" key="5"/>
<reference evidence="5" key="1">
    <citation type="journal article" date="2007" name="Gene">
        <title>Hemoglobin structure/function and globin-gene evolution in the Arctic fish Liparis tunicatus.</title>
        <authorList>
            <person name="Giordano D."/>
            <person name="Vergara A."/>
            <person name="Lee H.C."/>
            <person name="Peisach J."/>
            <person name="Balestrieri M."/>
            <person name="Mazzarella L."/>
            <person name="Parisi E."/>
            <person name="Prisco G."/>
            <person name="Verde C."/>
        </authorList>
    </citation>
    <scope>PROTEIN SEQUENCE OF 2-143</scope>
    <scope>FUNCTION</scope>
    <scope>SUBUNIT</scope>
    <scope>ACETYLATION AT SER-2</scope>
    <source>
        <tissue evidence="3">Blood</tissue>
    </source>
</reference>
<name>HBA1_LIPTU</name>
<protein>
    <recommendedName>
        <fullName>Hemoglobin subunit alpha-1</fullName>
    </recommendedName>
    <alternativeName>
        <fullName>Alpha-1-globin</fullName>
    </alternativeName>
    <alternativeName>
        <fullName>Hemoglobin alpha-1 chain</fullName>
    </alternativeName>
</protein>
<organism>
    <name type="scientific">Liparis tunicatus</name>
    <name type="common">Kelp snailfish</name>
    <dbReference type="NCBI Taxonomy" id="420949"/>
    <lineage>
        <taxon>Eukaryota</taxon>
        <taxon>Metazoa</taxon>
        <taxon>Chordata</taxon>
        <taxon>Craniata</taxon>
        <taxon>Vertebrata</taxon>
        <taxon>Euteleostomi</taxon>
        <taxon>Actinopterygii</taxon>
        <taxon>Neopterygii</taxon>
        <taxon>Teleostei</taxon>
        <taxon>Neoteleostei</taxon>
        <taxon>Acanthomorphata</taxon>
        <taxon>Eupercaria</taxon>
        <taxon>Perciformes</taxon>
        <taxon>Cottioidei</taxon>
        <taxon>Cottales</taxon>
        <taxon>Liparidae</taxon>
        <taxon>Liparis</taxon>
    </lineage>
</organism>
<gene>
    <name evidence="1 4" type="primary">hba1</name>
</gene>
<comment type="function">
    <text evidence="3 5">Involved in oxygen transport from gills to the various peripheral tissues.</text>
</comment>
<comment type="subunit">
    <text evidence="3">Hb1 is a heterotetramer of two alpha-1 chains and two beta-1 chains.</text>
</comment>
<comment type="tissue specificity">
    <text evidence="5">Red blood cells.</text>
</comment>
<comment type="miscellaneous">
    <text>This fish has two hemoglobins: Hb1 (major) and Hb2. Hb1 has low oxygen affinity, it displays a pronounced Bohr effect, which is enhanced by ATP, and a pronounced Root effect.</text>
</comment>
<comment type="similarity">
    <text evidence="2">Belongs to the globin family.</text>
</comment>
<accession>P85081</accession>
<keyword id="KW-0007">Acetylation</keyword>
<keyword id="KW-0903">Direct protein sequencing</keyword>
<keyword id="KW-0349">Heme</keyword>
<keyword id="KW-0408">Iron</keyword>
<keyword id="KW-0479">Metal-binding</keyword>
<keyword id="KW-0561">Oxygen transport</keyword>
<keyword id="KW-0813">Transport</keyword>
<dbReference type="SMR" id="P85081"/>
<dbReference type="iPTMnet" id="P85081"/>
<dbReference type="GO" id="GO:0072562">
    <property type="term" value="C:blood microparticle"/>
    <property type="evidence" value="ECO:0007669"/>
    <property type="project" value="TreeGrafter"/>
</dbReference>
<dbReference type="GO" id="GO:0031838">
    <property type="term" value="C:haptoglobin-hemoglobin complex"/>
    <property type="evidence" value="ECO:0007669"/>
    <property type="project" value="TreeGrafter"/>
</dbReference>
<dbReference type="GO" id="GO:0005833">
    <property type="term" value="C:hemoglobin complex"/>
    <property type="evidence" value="ECO:0007669"/>
    <property type="project" value="InterPro"/>
</dbReference>
<dbReference type="GO" id="GO:0031720">
    <property type="term" value="F:haptoglobin binding"/>
    <property type="evidence" value="ECO:0007669"/>
    <property type="project" value="TreeGrafter"/>
</dbReference>
<dbReference type="GO" id="GO:0020037">
    <property type="term" value="F:heme binding"/>
    <property type="evidence" value="ECO:0007669"/>
    <property type="project" value="InterPro"/>
</dbReference>
<dbReference type="GO" id="GO:0005506">
    <property type="term" value="F:iron ion binding"/>
    <property type="evidence" value="ECO:0007669"/>
    <property type="project" value="InterPro"/>
</dbReference>
<dbReference type="GO" id="GO:0043177">
    <property type="term" value="F:organic acid binding"/>
    <property type="evidence" value="ECO:0007669"/>
    <property type="project" value="TreeGrafter"/>
</dbReference>
<dbReference type="GO" id="GO:0019825">
    <property type="term" value="F:oxygen binding"/>
    <property type="evidence" value="ECO:0007669"/>
    <property type="project" value="InterPro"/>
</dbReference>
<dbReference type="GO" id="GO:0005344">
    <property type="term" value="F:oxygen carrier activity"/>
    <property type="evidence" value="ECO:0007669"/>
    <property type="project" value="UniProtKB-KW"/>
</dbReference>
<dbReference type="GO" id="GO:0004601">
    <property type="term" value="F:peroxidase activity"/>
    <property type="evidence" value="ECO:0007669"/>
    <property type="project" value="TreeGrafter"/>
</dbReference>
<dbReference type="GO" id="GO:0042744">
    <property type="term" value="P:hydrogen peroxide catabolic process"/>
    <property type="evidence" value="ECO:0007669"/>
    <property type="project" value="TreeGrafter"/>
</dbReference>
<dbReference type="CDD" id="cd08927">
    <property type="entry name" value="Hb-alpha-like"/>
    <property type="match status" value="1"/>
</dbReference>
<dbReference type="FunFam" id="1.10.490.10:FF:000002">
    <property type="entry name" value="Hemoglobin subunit alpha"/>
    <property type="match status" value="1"/>
</dbReference>
<dbReference type="Gene3D" id="1.10.490.10">
    <property type="entry name" value="Globins"/>
    <property type="match status" value="1"/>
</dbReference>
<dbReference type="InterPro" id="IPR000971">
    <property type="entry name" value="Globin"/>
</dbReference>
<dbReference type="InterPro" id="IPR009050">
    <property type="entry name" value="Globin-like_sf"/>
</dbReference>
<dbReference type="InterPro" id="IPR012292">
    <property type="entry name" value="Globin/Proto"/>
</dbReference>
<dbReference type="InterPro" id="IPR002338">
    <property type="entry name" value="Hemoglobin_a-typ"/>
</dbReference>
<dbReference type="InterPro" id="IPR050056">
    <property type="entry name" value="Hemoglobin_oxygen_transport"/>
</dbReference>
<dbReference type="InterPro" id="IPR002339">
    <property type="entry name" value="Hemoglobin_pi"/>
</dbReference>
<dbReference type="PANTHER" id="PTHR11442">
    <property type="entry name" value="HEMOGLOBIN FAMILY MEMBER"/>
    <property type="match status" value="1"/>
</dbReference>
<dbReference type="PANTHER" id="PTHR11442:SF41">
    <property type="entry name" value="HEMOGLOBIN SUBUNIT ZETA"/>
    <property type="match status" value="1"/>
</dbReference>
<dbReference type="Pfam" id="PF00042">
    <property type="entry name" value="Globin"/>
    <property type="match status" value="1"/>
</dbReference>
<dbReference type="PRINTS" id="PR00612">
    <property type="entry name" value="ALPHAHAEM"/>
</dbReference>
<dbReference type="PRINTS" id="PR00815">
    <property type="entry name" value="PIHAEM"/>
</dbReference>
<dbReference type="SUPFAM" id="SSF46458">
    <property type="entry name" value="Globin-like"/>
    <property type="match status" value="1"/>
</dbReference>
<dbReference type="PROSITE" id="PS01033">
    <property type="entry name" value="GLOBIN"/>
    <property type="match status" value="1"/>
</dbReference>
<sequence length="143" mass="15770">MSLSTKDKETVKDLWGHISASADAIGADALGRLLVVYPQTKIYFLHWPDLSPNSPSVKNHGKNIMSGIALAVTKIDDLKSGLNALSEQHAFQLRVDPANFKLLSHCILVVLAIRFPHEFTPEAHVAMDKFFCGVSLALAEKYR</sequence>